<keyword id="KW-1185">Reference proteome</keyword>
<keyword id="KW-0946">Virion</keyword>
<proteinExistence type="evidence at protein level"/>
<sequence>MSSNNDNSTNNKNNVNINTDNRLYQLDELISDIYKAVYIKDNDYTIKFIDVKDINLPRFKLSDYDLDIIFDKIKYAGSFPTGIVIDGTSTNEIWFKRRGETEMSTIRIVPYQNKEAVDDITDPINVNQIMKTLLSELVVSEKTNNILLPVINVDVLGSDLTTYGKISPYINSSDDTYYSVQVTEKYYSLKTLDQFFKDYVIEARTIKSIIYQAIDVLYQISVQYPKFKYNQLFPETIDCYLKQDNNLIIPEIKLSNFYLSSIDDLVKNSYLDSNDFTVEQIADQYGDLYQLVNYMWNNLQSSIQNFPDVIKIFDIVLPKKIRSKELYLTSELWNLLSEDEKFELKIKNLRNNHIFTSKDSLSNTTFVKSKDQPIDFSGGSEDNELSVEDFEASEDLNDIDESIPVVKNSSKIKYPHKDIGIMANNKTISDRKLTDNLSNKSSNDNTSETTSDKSYRSSNSRNSDNSKSKTTRSKTQSSDSSKSSRIPRSSESKRSTNSVVSVGSTGSDVYSDMERTEYPSRSTYKSRTINRSDSESSPVSSRTSSPVDDSRLKQSRISEDKPRKNKAYRGRRVIGQNNTASLLAALNDDNYNQGQNNVTDINSIGSMLGVSVNELASKNSNPNYSQIMQQIASQMNGQQASPNSLFGQAGNINQQLNPQQLSALLGQSYNPNTQFNQLNQLGQLGQLNSMNSINQMAQLGQMGQLGQTGQVNPMSQMSQMNTMNPMGQPNQSYNSQNDTDLLYRYMATLNQGQSGQQMDPNAIATLMQQNSTGFPSYAQLGGNVNNNNNMNRNPFFFQ</sequence>
<organismHost>
    <name type="scientific">Acanthamoeba polyphaga</name>
    <name type="common">Amoeba</name>
    <dbReference type="NCBI Taxonomy" id="5757"/>
</organismHost>
<name>YR402_MIMIV</name>
<evidence type="ECO:0000256" key="1">
    <source>
        <dbReference type="SAM" id="MobiDB-lite"/>
    </source>
</evidence>
<evidence type="ECO:0000269" key="2">
    <source>
    </source>
</evidence>
<protein>
    <recommendedName>
        <fullName>Uncharacterized protein R402</fullName>
    </recommendedName>
</protein>
<feature type="chain" id="PRO_0000309194" description="Uncharacterized protein R402">
    <location>
        <begin position="1"/>
        <end position="798"/>
    </location>
</feature>
<feature type="region of interest" description="Disordered" evidence="1">
    <location>
        <begin position="432"/>
        <end position="573"/>
    </location>
</feature>
<feature type="compositionally biased region" description="Low complexity" evidence="1">
    <location>
        <begin position="438"/>
        <end position="449"/>
    </location>
</feature>
<feature type="compositionally biased region" description="Low complexity" evidence="1">
    <location>
        <begin position="456"/>
        <end position="465"/>
    </location>
</feature>
<feature type="compositionally biased region" description="Low complexity" evidence="1">
    <location>
        <begin position="473"/>
        <end position="487"/>
    </location>
</feature>
<feature type="compositionally biased region" description="Low complexity" evidence="1">
    <location>
        <begin position="495"/>
        <end position="510"/>
    </location>
</feature>
<feature type="compositionally biased region" description="Polar residues" evidence="1">
    <location>
        <begin position="519"/>
        <end position="529"/>
    </location>
</feature>
<feature type="compositionally biased region" description="Low complexity" evidence="1">
    <location>
        <begin position="535"/>
        <end position="547"/>
    </location>
</feature>
<feature type="compositionally biased region" description="Basic and acidic residues" evidence="1">
    <location>
        <begin position="548"/>
        <end position="562"/>
    </location>
</feature>
<feature type="compositionally biased region" description="Basic residues" evidence="1">
    <location>
        <begin position="563"/>
        <end position="572"/>
    </location>
</feature>
<comment type="subcellular location">
    <subcellularLocation>
        <location evidence="2">Virion</location>
    </subcellularLocation>
</comment>
<organism>
    <name type="scientific">Acanthamoeba polyphaga mimivirus</name>
    <name type="common">APMV</name>
    <dbReference type="NCBI Taxonomy" id="212035"/>
    <lineage>
        <taxon>Viruses</taxon>
        <taxon>Varidnaviria</taxon>
        <taxon>Bamfordvirae</taxon>
        <taxon>Nucleocytoviricota</taxon>
        <taxon>Megaviricetes</taxon>
        <taxon>Imitervirales</taxon>
        <taxon>Mimiviridae</taxon>
        <taxon>Megamimivirinae</taxon>
        <taxon>Mimivirus</taxon>
        <taxon>Mimivirus bradfordmassiliense</taxon>
    </lineage>
</organism>
<reference key="1">
    <citation type="journal article" date="2004" name="Science">
        <title>The 1.2-megabase genome sequence of Mimivirus.</title>
        <authorList>
            <person name="Raoult D."/>
            <person name="Audic S."/>
            <person name="Robert C."/>
            <person name="Abergel C."/>
            <person name="Renesto P."/>
            <person name="Ogata H."/>
            <person name="La Scola B."/>
            <person name="Susan M."/>
            <person name="Claverie J.-M."/>
        </authorList>
    </citation>
    <scope>NUCLEOTIDE SEQUENCE [LARGE SCALE GENOMIC DNA]</scope>
    <source>
        <strain>Rowbotham-Bradford</strain>
    </source>
</reference>
<reference key="2">
    <citation type="journal article" date="2006" name="J. Virol.">
        <title>Mimivirus giant particles incorporate a large fraction of anonymous and unique gene products.</title>
        <authorList>
            <person name="Renesto P."/>
            <person name="Abergel C."/>
            <person name="Decloquement P."/>
            <person name="Moinier D."/>
            <person name="Azza S."/>
            <person name="Ogata H."/>
            <person name="Fourquet P."/>
            <person name="Gorvel J.-P."/>
            <person name="Claverie J.-M."/>
            <person name="Raoult D."/>
        </authorList>
    </citation>
    <scope>IDENTIFICATION BY MASS SPECTROMETRY [LARGE SCALE ANALYSIS]</scope>
    <scope>SUBCELLULAR LOCATION</scope>
</reference>
<gene>
    <name type="ordered locus">MIMI_R402</name>
</gene>
<accession>Q5UQK6</accession>
<dbReference type="EMBL" id="AY653733">
    <property type="protein sequence ID" value="AAV50671.1"/>
    <property type="molecule type" value="Genomic_DNA"/>
</dbReference>
<dbReference type="KEGG" id="vg:9925023"/>
<dbReference type="Proteomes" id="UP000001134">
    <property type="component" value="Genome"/>
</dbReference>
<dbReference type="GO" id="GO:0044423">
    <property type="term" value="C:virion component"/>
    <property type="evidence" value="ECO:0007669"/>
    <property type="project" value="UniProtKB-KW"/>
</dbReference>